<protein>
    <recommendedName>
        <fullName>Pentatricopeptide repeat-containing protein At3g04750, mitochondrial</fullName>
    </recommendedName>
</protein>
<proteinExistence type="evidence at transcript level"/>
<organism>
    <name type="scientific">Arabidopsis thaliana</name>
    <name type="common">Mouse-ear cress</name>
    <dbReference type="NCBI Taxonomy" id="3702"/>
    <lineage>
        <taxon>Eukaryota</taxon>
        <taxon>Viridiplantae</taxon>
        <taxon>Streptophyta</taxon>
        <taxon>Embryophyta</taxon>
        <taxon>Tracheophyta</taxon>
        <taxon>Spermatophyta</taxon>
        <taxon>Magnoliopsida</taxon>
        <taxon>eudicotyledons</taxon>
        <taxon>Gunneridae</taxon>
        <taxon>Pentapetalae</taxon>
        <taxon>rosids</taxon>
        <taxon>malvids</taxon>
        <taxon>Brassicales</taxon>
        <taxon>Brassicaceae</taxon>
        <taxon>Camelineae</taxon>
        <taxon>Arabidopsis</taxon>
    </lineage>
</organism>
<sequence length="661" mass="74767">MCFVLLLRRGFRLFGTECGSKTTKWDPVQSLQLNHQSLVLLENCNSRNQFKQVLAQIMRFNLICDTFPMSRLIFFSAITYPENLDLAKLLFLNFTPNPNVFVYNTMISAVSSSKNECFGLYSSMIRHRVSPDRQTFLYLMKASSFLSEVKQIHCHIIVSGCLSLGNYLWNSLVKFYMELGNFGVAEKVFARMPHPDVSSFNVMIVGYAKQGFSLEALKLYFKMVSDGIEPDEYTVLSLLVCCGHLSDIRLGKGVHGWIERRGPVYSSNLILSNALLDMYFKCKESGLAKRAFDAMKKKDMRSWNTMVVGFVRLGDMEAAQAVFDQMPKRDLVSWNSLLFGYSKKGCDQRTVRELFYEMTIVEKVKPDRVTMVSLISGAANNGELSHGRWVHGLVIRLQLKGDAFLSSALIDMYCKCGIIERAFMVFKTATEKDVALWTSMITGLAFHGNGQQALQLFGRMQEEGVTPNNVTLLAVLTACSHSGLVEEGLHVFNHMKDKFGFDPETEHYGSLVDLLCRAGRVEEAKDIVQKKMPMRPSQSMWGSILSACRGGEDIETAELALTELLKLEPEKEGGYVLLSNIYATVGRWGYSDKTREAMENRGVKKTAGYSSVVGVEGLHRFVAAEKQNHPRWTEIKRILQHLYNEMKPKLDCLDLLEIEIK</sequence>
<keyword id="KW-0496">Mitochondrion</keyword>
<keyword id="KW-1185">Reference proteome</keyword>
<keyword id="KW-0677">Repeat</keyword>
<keyword id="KW-0809">Transit peptide</keyword>
<accession>Q9SR01</accession>
<evidence type="ECO:0000255" key="1"/>
<evidence type="ECO:0000305" key="2"/>
<dbReference type="EMBL" id="AC011437">
    <property type="protein sequence ID" value="AAF04901.1"/>
    <property type="molecule type" value="Genomic_DNA"/>
</dbReference>
<dbReference type="EMBL" id="CP002686">
    <property type="protein sequence ID" value="AEE74131.1"/>
    <property type="molecule type" value="Genomic_DNA"/>
</dbReference>
<dbReference type="RefSeq" id="NP_187126.1">
    <property type="nucleotide sequence ID" value="NM_111347.2"/>
</dbReference>
<dbReference type="SMR" id="Q9SR01"/>
<dbReference type="FunCoup" id="Q9SR01">
    <property type="interactions" value="256"/>
</dbReference>
<dbReference type="iPTMnet" id="Q9SR01"/>
<dbReference type="PaxDb" id="3702-AT3G04750.1"/>
<dbReference type="ProteomicsDB" id="249171"/>
<dbReference type="EnsemblPlants" id="AT3G04750.1">
    <property type="protein sequence ID" value="AT3G04750.1"/>
    <property type="gene ID" value="AT3G04750"/>
</dbReference>
<dbReference type="GeneID" id="819635"/>
<dbReference type="Gramene" id="AT3G04750.1">
    <property type="protein sequence ID" value="AT3G04750.1"/>
    <property type="gene ID" value="AT3G04750"/>
</dbReference>
<dbReference type="KEGG" id="ath:AT3G04750"/>
<dbReference type="Araport" id="AT3G04750"/>
<dbReference type="TAIR" id="AT3G04750"/>
<dbReference type="eggNOG" id="KOG4197">
    <property type="taxonomic scope" value="Eukaryota"/>
</dbReference>
<dbReference type="HOGENOM" id="CLU_002706_0_1_1"/>
<dbReference type="InParanoid" id="Q9SR01"/>
<dbReference type="OMA" id="KLAYAVF"/>
<dbReference type="OrthoDB" id="1909720at2759"/>
<dbReference type="PhylomeDB" id="Q9SR01"/>
<dbReference type="PRO" id="PR:Q9SR01"/>
<dbReference type="Proteomes" id="UP000006548">
    <property type="component" value="Chromosome 3"/>
</dbReference>
<dbReference type="ExpressionAtlas" id="Q9SR01">
    <property type="expression patterns" value="baseline and differential"/>
</dbReference>
<dbReference type="GO" id="GO:0005739">
    <property type="term" value="C:mitochondrion"/>
    <property type="evidence" value="ECO:0007669"/>
    <property type="project" value="UniProtKB-SubCell"/>
</dbReference>
<dbReference type="GO" id="GO:0003723">
    <property type="term" value="F:RNA binding"/>
    <property type="evidence" value="ECO:0007669"/>
    <property type="project" value="InterPro"/>
</dbReference>
<dbReference type="GO" id="GO:0009451">
    <property type="term" value="P:RNA modification"/>
    <property type="evidence" value="ECO:0007669"/>
    <property type="project" value="InterPro"/>
</dbReference>
<dbReference type="FunFam" id="1.25.40.10:FF:001925">
    <property type="entry name" value="Pentatricopeptide repeat-containing protein At3g04750, mitochondrial"/>
    <property type="match status" value="1"/>
</dbReference>
<dbReference type="FunFam" id="1.25.40.10:FF:000412">
    <property type="entry name" value="Putative pentatricopeptide repeat-containing protein"/>
    <property type="match status" value="1"/>
</dbReference>
<dbReference type="Gene3D" id="1.25.40.10">
    <property type="entry name" value="Tetratricopeptide repeat domain"/>
    <property type="match status" value="3"/>
</dbReference>
<dbReference type="InterPro" id="IPR046848">
    <property type="entry name" value="E_motif"/>
</dbReference>
<dbReference type="InterPro" id="IPR002885">
    <property type="entry name" value="Pentatricopeptide_rpt"/>
</dbReference>
<dbReference type="InterPro" id="IPR046960">
    <property type="entry name" value="PPR_At4g14850-like_plant"/>
</dbReference>
<dbReference type="InterPro" id="IPR011990">
    <property type="entry name" value="TPR-like_helical_dom_sf"/>
</dbReference>
<dbReference type="NCBIfam" id="TIGR00756">
    <property type="entry name" value="PPR"/>
    <property type="match status" value="3"/>
</dbReference>
<dbReference type="PANTHER" id="PTHR47926:SF492">
    <property type="entry name" value="DYW DOMAIN-CONTAINING PROTEIN"/>
    <property type="match status" value="1"/>
</dbReference>
<dbReference type="PANTHER" id="PTHR47926">
    <property type="entry name" value="PENTATRICOPEPTIDE REPEAT-CONTAINING PROTEIN"/>
    <property type="match status" value="1"/>
</dbReference>
<dbReference type="Pfam" id="PF20431">
    <property type="entry name" value="E_motif"/>
    <property type="match status" value="1"/>
</dbReference>
<dbReference type="Pfam" id="PF01535">
    <property type="entry name" value="PPR"/>
    <property type="match status" value="5"/>
</dbReference>
<dbReference type="Pfam" id="PF13041">
    <property type="entry name" value="PPR_2"/>
    <property type="match status" value="2"/>
</dbReference>
<dbReference type="PROSITE" id="PS51375">
    <property type="entry name" value="PPR"/>
    <property type="match status" value="10"/>
</dbReference>
<gene>
    <name type="primary">PCMP-E81</name>
    <name type="ordered locus">At3g04750</name>
    <name type="ORF">F7O18.24</name>
</gene>
<comment type="subcellular location">
    <subcellularLocation>
        <location evidence="2">Mitochondrion</location>
    </subcellularLocation>
</comment>
<comment type="similarity">
    <text evidence="2">Belongs to the PPR family. PCMP-E subfamily.</text>
</comment>
<comment type="online information" name="Pentatricopeptide repeat proteins">
    <link uri="https://ppr.plantenergy.uwa.edu.au"/>
</comment>
<reference key="1">
    <citation type="journal article" date="2000" name="Nature">
        <title>Sequence and analysis of chromosome 3 of the plant Arabidopsis thaliana.</title>
        <authorList>
            <person name="Salanoubat M."/>
            <person name="Lemcke K."/>
            <person name="Rieger M."/>
            <person name="Ansorge W."/>
            <person name="Unseld M."/>
            <person name="Fartmann B."/>
            <person name="Valle G."/>
            <person name="Bloecker H."/>
            <person name="Perez-Alonso M."/>
            <person name="Obermaier B."/>
            <person name="Delseny M."/>
            <person name="Boutry M."/>
            <person name="Grivell L.A."/>
            <person name="Mache R."/>
            <person name="Puigdomenech P."/>
            <person name="De Simone V."/>
            <person name="Choisne N."/>
            <person name="Artiguenave F."/>
            <person name="Robert C."/>
            <person name="Brottier P."/>
            <person name="Wincker P."/>
            <person name="Cattolico L."/>
            <person name="Weissenbach J."/>
            <person name="Saurin W."/>
            <person name="Quetier F."/>
            <person name="Schaefer M."/>
            <person name="Mueller-Auer S."/>
            <person name="Gabel C."/>
            <person name="Fuchs M."/>
            <person name="Benes V."/>
            <person name="Wurmbach E."/>
            <person name="Drzonek H."/>
            <person name="Erfle H."/>
            <person name="Jordan N."/>
            <person name="Bangert S."/>
            <person name="Wiedelmann R."/>
            <person name="Kranz H."/>
            <person name="Voss H."/>
            <person name="Holland R."/>
            <person name="Brandt P."/>
            <person name="Nyakatura G."/>
            <person name="Vezzi A."/>
            <person name="D'Angelo M."/>
            <person name="Pallavicini A."/>
            <person name="Toppo S."/>
            <person name="Simionati B."/>
            <person name="Conrad A."/>
            <person name="Hornischer K."/>
            <person name="Kauer G."/>
            <person name="Loehnert T.-H."/>
            <person name="Nordsiek G."/>
            <person name="Reichelt J."/>
            <person name="Scharfe M."/>
            <person name="Schoen O."/>
            <person name="Bargues M."/>
            <person name="Terol J."/>
            <person name="Climent J."/>
            <person name="Navarro P."/>
            <person name="Collado C."/>
            <person name="Perez-Perez A."/>
            <person name="Ottenwaelder B."/>
            <person name="Duchemin D."/>
            <person name="Cooke R."/>
            <person name="Laudie M."/>
            <person name="Berger-Llauro C."/>
            <person name="Purnelle B."/>
            <person name="Masuy D."/>
            <person name="de Haan M."/>
            <person name="Maarse A.C."/>
            <person name="Alcaraz J.-P."/>
            <person name="Cottet A."/>
            <person name="Casacuberta E."/>
            <person name="Monfort A."/>
            <person name="Argiriou A."/>
            <person name="Flores M."/>
            <person name="Liguori R."/>
            <person name="Vitale D."/>
            <person name="Mannhaupt G."/>
            <person name="Haase D."/>
            <person name="Schoof H."/>
            <person name="Rudd S."/>
            <person name="Zaccaria P."/>
            <person name="Mewes H.-W."/>
            <person name="Mayer K.F.X."/>
            <person name="Kaul S."/>
            <person name="Town C.D."/>
            <person name="Koo H.L."/>
            <person name="Tallon L.J."/>
            <person name="Jenkins J."/>
            <person name="Rooney T."/>
            <person name="Rizzo M."/>
            <person name="Walts A."/>
            <person name="Utterback T."/>
            <person name="Fujii C.Y."/>
            <person name="Shea T.P."/>
            <person name="Creasy T.H."/>
            <person name="Haas B."/>
            <person name="Maiti R."/>
            <person name="Wu D."/>
            <person name="Peterson J."/>
            <person name="Van Aken S."/>
            <person name="Pai G."/>
            <person name="Militscher J."/>
            <person name="Sellers P."/>
            <person name="Gill J.E."/>
            <person name="Feldblyum T.V."/>
            <person name="Preuss D."/>
            <person name="Lin X."/>
            <person name="Nierman W.C."/>
            <person name="Salzberg S.L."/>
            <person name="White O."/>
            <person name="Venter J.C."/>
            <person name="Fraser C.M."/>
            <person name="Kaneko T."/>
            <person name="Nakamura Y."/>
            <person name="Sato S."/>
            <person name="Kato T."/>
            <person name="Asamizu E."/>
            <person name="Sasamoto S."/>
            <person name="Kimura T."/>
            <person name="Idesawa K."/>
            <person name="Kawashima K."/>
            <person name="Kishida Y."/>
            <person name="Kiyokawa C."/>
            <person name="Kohara M."/>
            <person name="Matsumoto M."/>
            <person name="Matsuno A."/>
            <person name="Muraki A."/>
            <person name="Nakayama S."/>
            <person name="Nakazaki N."/>
            <person name="Shinpo S."/>
            <person name="Takeuchi C."/>
            <person name="Wada T."/>
            <person name="Watanabe A."/>
            <person name="Yamada M."/>
            <person name="Yasuda M."/>
            <person name="Tabata S."/>
        </authorList>
    </citation>
    <scope>NUCLEOTIDE SEQUENCE [LARGE SCALE GENOMIC DNA]</scope>
    <source>
        <strain>cv. Columbia</strain>
    </source>
</reference>
<reference key="2">
    <citation type="journal article" date="2017" name="Plant J.">
        <title>Araport11: a complete reannotation of the Arabidopsis thaliana reference genome.</title>
        <authorList>
            <person name="Cheng C.Y."/>
            <person name="Krishnakumar V."/>
            <person name="Chan A.P."/>
            <person name="Thibaud-Nissen F."/>
            <person name="Schobel S."/>
            <person name="Town C.D."/>
        </authorList>
    </citation>
    <scope>GENOME REANNOTATION</scope>
    <source>
        <strain>cv. Columbia</strain>
    </source>
</reference>
<reference key="3">
    <citation type="journal article" date="2004" name="Plant Cell">
        <title>Genome-wide analysis of Arabidopsis pentatricopeptide repeat proteins reveals their essential role in organelle biogenesis.</title>
        <authorList>
            <person name="Lurin C."/>
            <person name="Andres C."/>
            <person name="Aubourg S."/>
            <person name="Bellaoui M."/>
            <person name="Bitton F."/>
            <person name="Bruyere C."/>
            <person name="Caboche M."/>
            <person name="Debast C."/>
            <person name="Gualberto J."/>
            <person name="Hoffmann B."/>
            <person name="Lecharny A."/>
            <person name="Le Ret M."/>
            <person name="Martin-Magniette M.-L."/>
            <person name="Mireau H."/>
            <person name="Peeters N."/>
            <person name="Renou J.-P."/>
            <person name="Szurek B."/>
            <person name="Taconnat L."/>
            <person name="Small I."/>
        </authorList>
    </citation>
    <scope>GENE FAMILY</scope>
</reference>
<name>PP212_ARATH</name>
<feature type="transit peptide" description="Mitochondrion" evidence="1">
    <location>
        <begin position="1"/>
        <end position="18"/>
    </location>
</feature>
<feature type="chain" id="PRO_0000356071" description="Pentatricopeptide repeat-containing protein At3g04750, mitochondrial">
    <location>
        <begin position="19"/>
        <end position="661"/>
    </location>
</feature>
<feature type="repeat" description="PPR 1">
    <location>
        <begin position="99"/>
        <end position="131"/>
    </location>
</feature>
<feature type="repeat" description="PPR 2">
    <location>
        <begin position="132"/>
        <end position="163"/>
    </location>
</feature>
<feature type="repeat" description="PPR 3">
    <location>
        <begin position="165"/>
        <end position="195"/>
    </location>
</feature>
<feature type="repeat" description="PPR 4">
    <location>
        <begin position="196"/>
        <end position="230"/>
    </location>
</feature>
<feature type="repeat" description="PPR 5">
    <location>
        <begin position="231"/>
        <end position="265"/>
    </location>
</feature>
<feature type="repeat" description="PPR 6">
    <location>
        <begin position="268"/>
        <end position="298"/>
    </location>
</feature>
<feature type="repeat" description="PPR 7">
    <location>
        <begin position="299"/>
        <end position="333"/>
    </location>
</feature>
<feature type="repeat" description="PPR 8">
    <location>
        <begin position="334"/>
        <end position="366"/>
    </location>
</feature>
<feature type="repeat" description="PPR 9">
    <location>
        <begin position="367"/>
        <end position="401"/>
    </location>
</feature>
<feature type="repeat" description="PPR 10">
    <location>
        <begin position="402"/>
        <end position="432"/>
    </location>
</feature>
<feature type="repeat" description="PPR 11">
    <location>
        <begin position="433"/>
        <end position="467"/>
    </location>
</feature>
<feature type="repeat" description="PPR 12">
    <location>
        <begin position="468"/>
        <end position="498"/>
    </location>
</feature>
<feature type="repeat" description="PPR 13">
    <location>
        <begin position="504"/>
        <end position="539"/>
    </location>
</feature>
<feature type="region of interest" description="Type E motif">
    <location>
        <begin position="540"/>
        <end position="615"/>
    </location>
</feature>
<feature type="region of interest" description="Type E(+) motif">
    <location>
        <begin position="616"/>
        <end position="647"/>
    </location>
</feature>